<dbReference type="EMBL" id="CR382125">
    <property type="protein sequence ID" value="CAG99962.1"/>
    <property type="molecule type" value="Genomic_DNA"/>
</dbReference>
<dbReference type="RefSeq" id="XP_454875.1">
    <property type="nucleotide sequence ID" value="XM_454875.1"/>
</dbReference>
<dbReference type="SMR" id="Q6CMG4"/>
<dbReference type="FunCoup" id="Q6CMG4">
    <property type="interactions" value="360"/>
</dbReference>
<dbReference type="STRING" id="284590.Q6CMG4"/>
<dbReference type="PaxDb" id="284590-Q6CMG4"/>
<dbReference type="KEGG" id="kla:KLLA0_E20439g"/>
<dbReference type="eggNOG" id="KOG2923">
    <property type="taxonomic scope" value="Eukaryota"/>
</dbReference>
<dbReference type="HOGENOM" id="CLU_155991_4_1_1"/>
<dbReference type="InParanoid" id="Q6CMG4"/>
<dbReference type="OMA" id="LFTYPCP"/>
<dbReference type="UniPathway" id="UPA00559"/>
<dbReference type="Proteomes" id="UP000000598">
    <property type="component" value="Chromosome E"/>
</dbReference>
<dbReference type="GO" id="GO:0005737">
    <property type="term" value="C:cytoplasm"/>
    <property type="evidence" value="ECO:0007669"/>
    <property type="project" value="UniProtKB-SubCell"/>
</dbReference>
<dbReference type="GO" id="GO:0005634">
    <property type="term" value="C:nucleus"/>
    <property type="evidence" value="ECO:0007669"/>
    <property type="project" value="UniProtKB-SubCell"/>
</dbReference>
<dbReference type="GO" id="GO:0008198">
    <property type="term" value="F:ferrous iron binding"/>
    <property type="evidence" value="ECO:0000250"/>
    <property type="project" value="UniProtKB"/>
</dbReference>
<dbReference type="GO" id="GO:0034986">
    <property type="term" value="F:iron chaperone activity"/>
    <property type="evidence" value="ECO:0000250"/>
    <property type="project" value="UniProtKB"/>
</dbReference>
<dbReference type="GO" id="GO:0016491">
    <property type="term" value="F:oxidoreductase activity"/>
    <property type="evidence" value="ECO:0007669"/>
    <property type="project" value="UniProtKB-KW"/>
</dbReference>
<dbReference type="GO" id="GO:0017183">
    <property type="term" value="P:protein histidyl modification to diphthamide"/>
    <property type="evidence" value="ECO:0000250"/>
    <property type="project" value="UniProtKB"/>
</dbReference>
<dbReference type="GO" id="GO:0002926">
    <property type="term" value="P:tRNA wobble base 5-methoxycarbonylmethyl-2-thiouridinylation"/>
    <property type="evidence" value="ECO:0000250"/>
    <property type="project" value="UniProtKB"/>
</dbReference>
<dbReference type="FunFam" id="3.10.660.10:FF:000001">
    <property type="entry name" value="Diphthamide biosynthesis 3"/>
    <property type="match status" value="1"/>
</dbReference>
<dbReference type="Gene3D" id="3.10.660.10">
    <property type="entry name" value="DPH Zinc finger"/>
    <property type="match status" value="1"/>
</dbReference>
<dbReference type="InterPro" id="IPR044248">
    <property type="entry name" value="DPH3/4-like"/>
</dbReference>
<dbReference type="InterPro" id="IPR007872">
    <property type="entry name" value="DPH_MB_dom"/>
</dbReference>
<dbReference type="InterPro" id="IPR036671">
    <property type="entry name" value="DPH_MB_sf"/>
</dbReference>
<dbReference type="PANTHER" id="PTHR21454:SF31">
    <property type="entry name" value="DIPHTHAMIDE BIOSYNTHESIS PROTEIN 3"/>
    <property type="match status" value="1"/>
</dbReference>
<dbReference type="PANTHER" id="PTHR21454">
    <property type="entry name" value="DPH3 HOMOLOG-RELATED"/>
    <property type="match status" value="1"/>
</dbReference>
<dbReference type="Pfam" id="PF05207">
    <property type="entry name" value="Zn_ribbon_CSL"/>
    <property type="match status" value="1"/>
</dbReference>
<dbReference type="SUPFAM" id="SSF144217">
    <property type="entry name" value="CSL zinc finger"/>
    <property type="match status" value="1"/>
</dbReference>
<dbReference type="PROSITE" id="PS51074">
    <property type="entry name" value="DPH_MB"/>
    <property type="match status" value="1"/>
</dbReference>
<reference key="1">
    <citation type="journal article" date="2004" name="Nature">
        <title>Genome evolution in yeasts.</title>
        <authorList>
            <person name="Dujon B."/>
            <person name="Sherman D."/>
            <person name="Fischer G."/>
            <person name="Durrens P."/>
            <person name="Casaregola S."/>
            <person name="Lafontaine I."/>
            <person name="de Montigny J."/>
            <person name="Marck C."/>
            <person name="Neuveglise C."/>
            <person name="Talla E."/>
            <person name="Goffard N."/>
            <person name="Frangeul L."/>
            <person name="Aigle M."/>
            <person name="Anthouard V."/>
            <person name="Babour A."/>
            <person name="Barbe V."/>
            <person name="Barnay S."/>
            <person name="Blanchin S."/>
            <person name="Beckerich J.-M."/>
            <person name="Beyne E."/>
            <person name="Bleykasten C."/>
            <person name="Boisrame A."/>
            <person name="Boyer J."/>
            <person name="Cattolico L."/>
            <person name="Confanioleri F."/>
            <person name="de Daruvar A."/>
            <person name="Despons L."/>
            <person name="Fabre E."/>
            <person name="Fairhead C."/>
            <person name="Ferry-Dumazet H."/>
            <person name="Groppi A."/>
            <person name="Hantraye F."/>
            <person name="Hennequin C."/>
            <person name="Jauniaux N."/>
            <person name="Joyet P."/>
            <person name="Kachouri R."/>
            <person name="Kerrest A."/>
            <person name="Koszul R."/>
            <person name="Lemaire M."/>
            <person name="Lesur I."/>
            <person name="Ma L."/>
            <person name="Muller H."/>
            <person name="Nicaud J.-M."/>
            <person name="Nikolski M."/>
            <person name="Oztas S."/>
            <person name="Ozier-Kalogeropoulos O."/>
            <person name="Pellenz S."/>
            <person name="Potier S."/>
            <person name="Richard G.-F."/>
            <person name="Straub M.-L."/>
            <person name="Suleau A."/>
            <person name="Swennen D."/>
            <person name="Tekaia F."/>
            <person name="Wesolowski-Louvel M."/>
            <person name="Westhof E."/>
            <person name="Wirth B."/>
            <person name="Zeniou-Meyer M."/>
            <person name="Zivanovic Y."/>
            <person name="Bolotin-Fukuhara M."/>
            <person name="Thierry A."/>
            <person name="Bouchier C."/>
            <person name="Caudron B."/>
            <person name="Scarpelli C."/>
            <person name="Gaillardin C."/>
            <person name="Weissenbach J."/>
            <person name="Wincker P."/>
            <person name="Souciet J.-L."/>
        </authorList>
    </citation>
    <scope>NUCLEOTIDE SEQUENCE [LARGE SCALE GENOMIC DNA]</scope>
    <source>
        <strain>ATCC 8585 / CBS 2359 / DSM 70799 / NBRC 1267 / NRRL Y-1140 / WM37</strain>
    </source>
</reference>
<evidence type="ECO:0000250" key="1"/>
<evidence type="ECO:0000250" key="2">
    <source>
        <dbReference type="UniProtKB" id="Q3E840"/>
    </source>
</evidence>
<evidence type="ECO:0000255" key="3">
    <source>
        <dbReference type="PROSITE-ProRule" id="PRU00456"/>
    </source>
</evidence>
<evidence type="ECO:0000305" key="4"/>
<sequence>MSTYDEVEIEDMTFDPDTQIFTYPCPCGDRFQISIDDMYDGEDIAVCPSCSLMIQVVFDKEDLVEYYVEANLEPPGKIAVAV</sequence>
<protein>
    <recommendedName>
        <fullName>Diphthamide biosynthesis protein 3</fullName>
    </recommendedName>
</protein>
<accession>Q6CMG4</accession>
<organism>
    <name type="scientific">Kluyveromyces lactis (strain ATCC 8585 / CBS 2359 / DSM 70799 / NBRC 1267 / NRRL Y-1140 / WM37)</name>
    <name type="common">Yeast</name>
    <name type="synonym">Candida sphaerica</name>
    <dbReference type="NCBI Taxonomy" id="284590"/>
    <lineage>
        <taxon>Eukaryota</taxon>
        <taxon>Fungi</taxon>
        <taxon>Dikarya</taxon>
        <taxon>Ascomycota</taxon>
        <taxon>Saccharomycotina</taxon>
        <taxon>Saccharomycetes</taxon>
        <taxon>Saccharomycetales</taxon>
        <taxon>Saccharomycetaceae</taxon>
        <taxon>Kluyveromyces</taxon>
    </lineage>
</organism>
<feature type="chain" id="PRO_0000082634" description="Diphthamide biosynthesis protein 3">
    <location>
        <begin position="1"/>
        <end position="82"/>
    </location>
</feature>
<feature type="domain" description="DPH-type MB" evidence="3">
    <location>
        <begin position="3"/>
        <end position="59"/>
    </location>
</feature>
<feature type="binding site" evidence="2">
    <location>
        <position position="25"/>
    </location>
    <ligand>
        <name>Fe cation</name>
        <dbReference type="ChEBI" id="CHEBI:24875"/>
    </ligand>
</feature>
<feature type="binding site" evidence="2">
    <location>
        <position position="27"/>
    </location>
    <ligand>
        <name>Fe cation</name>
        <dbReference type="ChEBI" id="CHEBI:24875"/>
    </ligand>
</feature>
<feature type="binding site" evidence="2">
    <location>
        <position position="47"/>
    </location>
    <ligand>
        <name>Fe cation</name>
        <dbReference type="ChEBI" id="CHEBI:24875"/>
    </ligand>
</feature>
<feature type="binding site" evidence="2">
    <location>
        <position position="50"/>
    </location>
    <ligand>
        <name>Fe cation</name>
        <dbReference type="ChEBI" id="CHEBI:24875"/>
    </ligand>
</feature>
<keyword id="KW-0963">Cytoplasm</keyword>
<keyword id="KW-0408">Iron</keyword>
<keyword id="KW-0479">Metal-binding</keyword>
<keyword id="KW-0539">Nucleus</keyword>
<keyword id="KW-0560">Oxidoreductase</keyword>
<keyword id="KW-1185">Reference proteome</keyword>
<comment type="function">
    <text evidence="2">Required for the first step of diphthamide biosynthesis, a post-translational modification of histidine which occurs in elongation factor 2. DPH1 and DPH2 transfer a 3-amino-3-carboxypropyl (ACP) group from S-adenosyl-L-methionine (SAM) to a histidine residue, the reaction is assisted by a reduction system comprising KTI11/DPH3 and a NADH-dependent reductase, predominantly CBR1. Acts as an electron donor to reduce the Fe-S cluster in DPH1-DPH2 keeping the [4Fe-4S] clusters in the active and reduced state. Restores iron to DPH1-DPH2 iron-sulfur clusters which have degraded from [4Fe-4S] to [3Fe-4S] by donating an iron atom to reform [4Fe-4S] clusters, in a manner dependent on the presence of elongation factor 2 and SAM. Associates with the elongator complex and is required for tRNA Wobble base modifications mediated by the elongator complex. The elongator complex is required for multiple tRNA modifications, including mcm5U (5-methoxycarbonylmethyl uridine), mcm5s 2U (5-methoxycarbonylmethyl-2-thiouridine), and ncm5U (5-carbamoylmethyl uridine).</text>
</comment>
<comment type="catalytic activity">
    <reaction evidence="2">
        <text>[3Fe-4S](1+)-[protein] + Fe(2+)-[Dph3] = [3Fe-4S](0)-[protein] + Fe(3+)-[Dph3]</text>
        <dbReference type="Rhea" id="RHEA:71235"/>
        <dbReference type="Rhea" id="RHEA-COMP:17996"/>
        <dbReference type="Rhea" id="RHEA-COMP:17997"/>
        <dbReference type="Rhea" id="RHEA-COMP:18002"/>
        <dbReference type="Rhea" id="RHEA-COMP:18003"/>
        <dbReference type="ChEBI" id="CHEBI:29033"/>
        <dbReference type="ChEBI" id="CHEBI:29034"/>
        <dbReference type="ChEBI" id="CHEBI:33751"/>
        <dbReference type="ChEBI" id="CHEBI:47402"/>
        <dbReference type="ChEBI" id="CHEBI:83228"/>
    </reaction>
</comment>
<comment type="catalytic activity">
    <reaction evidence="2">
        <text>2 [3Fe-4S](0)-[protein] + 2 Fe(2+)-[Dph3] + NADH = 2 [4Fe-4S](1+)-[protein] + 2 [Dph3] + NAD(+) + H(+)</text>
        <dbReference type="Rhea" id="RHEA:71239"/>
        <dbReference type="Rhea" id="RHEA-COMP:17997"/>
        <dbReference type="Rhea" id="RHEA-COMP:17998"/>
        <dbReference type="Rhea" id="RHEA-COMP:18001"/>
        <dbReference type="Rhea" id="RHEA-COMP:18002"/>
        <dbReference type="ChEBI" id="CHEBI:15378"/>
        <dbReference type="ChEBI" id="CHEBI:29033"/>
        <dbReference type="ChEBI" id="CHEBI:33723"/>
        <dbReference type="ChEBI" id="CHEBI:47402"/>
        <dbReference type="ChEBI" id="CHEBI:57540"/>
        <dbReference type="ChEBI" id="CHEBI:57945"/>
        <dbReference type="ChEBI" id="CHEBI:83228"/>
    </reaction>
</comment>
<comment type="cofactor">
    <cofactor evidence="2">
        <name>Fe(2+)</name>
        <dbReference type="ChEBI" id="CHEBI:29033"/>
    </cofactor>
</comment>
<comment type="pathway">
    <text evidence="2">Protein modification; peptidyl-diphthamide biosynthesis.</text>
</comment>
<comment type="subunit">
    <text evidence="2">Component of the 2-(3-amino-3-carboxypropyl)histidine synthase complex composed of DPH1, DPH2, DPH3 and a NADH-dependent reductase, predominantly CBR1.</text>
</comment>
<comment type="subcellular location">
    <subcellularLocation>
        <location evidence="1">Cytoplasm</location>
    </subcellularLocation>
    <subcellularLocation>
        <location evidence="1">Nucleus</location>
    </subcellularLocation>
</comment>
<comment type="domain">
    <text evidence="2">The DPH-type metal-binding (MB) domain can also bind zinc. However, iron is the physiological binding partner as zinc binding impairs the protein electron donor function.</text>
</comment>
<comment type="similarity">
    <text evidence="4">Belongs to the DPH3 family.</text>
</comment>
<gene>
    <name type="primary">DPH3</name>
    <name type="ordered locus">KLLA0E20537g</name>
</gene>
<proteinExistence type="inferred from homology"/>
<name>DPH3_KLULA</name>